<gene>
    <name evidence="16" type="primary">Pln</name>
</gene>
<sequence length="52" mass="6095">MEKVQYLTRSAIRRASTIEMPQQARQNLQNLFINFCLILICLLLICIIVMLL</sequence>
<feature type="chain" id="PRO_0000191245" description="Phospholamban">
    <location>
        <begin position="1"/>
        <end position="52"/>
    </location>
</feature>
<feature type="topological domain" description="Cytoplasmic" evidence="4">
    <location>
        <begin position="1"/>
        <end position="31"/>
    </location>
</feature>
<feature type="transmembrane region" description="Helical" evidence="4">
    <location>
        <begin position="32"/>
        <end position="52"/>
    </location>
</feature>
<feature type="modified residue" description="N-acetylmethionine" evidence="1">
    <location>
        <position position="1"/>
    </location>
</feature>
<feature type="modified residue" description="Phosphoserine; by PKA" evidence="6 7 8 17">
    <location>
        <position position="16"/>
    </location>
</feature>
<feature type="modified residue" description="Phosphothreonine; by CaMK2" evidence="3">
    <location>
        <position position="17"/>
    </location>
</feature>
<feature type="lipid moiety-binding region" description="S-palmitoyl cysteine" evidence="8">
    <location>
        <position position="36"/>
    </location>
</feature>
<feature type="mutagenesis site" description="No effect on inhibition of ATP2A1-mediated calcium uptake." evidence="7">
    <original>MPQ</original>
    <variation>GGG</variation>
    <location>
        <begin position="20"/>
        <end position="22"/>
    </location>
</feature>
<feature type="mutagenesis site" description="Nearly abolishes inhibition of ATP2A1-mediated calcium uptake.">
    <original>MP</original>
    <variation>GG</variation>
    <location>
        <begin position="20"/>
        <end position="21"/>
    </location>
</feature>
<feature type="mutagenesis site" description="Reduces inhibition of ATP2A1-mediated calcium uptake." evidence="7">
    <original>P</original>
    <variation>G</variation>
    <location>
        <position position="21"/>
    </location>
</feature>
<feature type="mutagenesis site" description="Strongly reduces inhibition of ATP2A1-mediated calcium uptake." evidence="7">
    <original>Q</original>
    <variation>G</variation>
    <location>
        <position position="22"/>
    </location>
</feature>
<feature type="mutagenesis site" description="Cleaved by SPPL2c." evidence="11">
    <original>FINFC</original>
    <variation>AAAAA</variation>
    <location>
        <begin position="32"/>
        <end position="36"/>
    </location>
</feature>
<feature type="mutagenesis site" description="Not cleaved by SPPL2c." evidence="11">
    <original>CLILICLLLIC</original>
    <variation>ALILIALLLIA</variation>
    <location>
        <begin position="36"/>
        <end position="46"/>
    </location>
</feature>
<feature type="mutagenesis site" description="Abolishes palmitoylation." evidence="8">
    <original>C</original>
    <variation>A</variation>
    <location>
        <position position="36"/>
    </location>
</feature>
<feature type="mutagenesis site" description="Does not affect palmitoylation." evidence="8">
    <original>C</original>
    <variation>A</variation>
    <location>
        <position position="41"/>
    </location>
</feature>
<feature type="mutagenesis site" description="Cleaved by SPPL2c." evidence="11">
    <original>LLLIC</original>
    <variation>AAAAA</variation>
    <location>
        <begin position="42"/>
        <end position="46"/>
    </location>
</feature>
<feature type="mutagenesis site" description="Does not affect palmitoylation." evidence="8">
    <original>C</original>
    <variation>A</variation>
    <location>
        <position position="46"/>
    </location>
</feature>
<feature type="turn" evidence="18">
    <location>
        <begin position="9"/>
        <end position="11"/>
    </location>
</feature>
<dbReference type="EMBL" id="S46792">
    <property type="protein sequence ID" value="AAB23706.1"/>
    <property type="molecule type" value="mRNA"/>
</dbReference>
<dbReference type="EMBL" id="AK002622">
    <property type="protein sequence ID" value="BAB22237.1"/>
    <property type="molecule type" value="mRNA"/>
</dbReference>
<dbReference type="EMBL" id="AK040718">
    <property type="protein sequence ID" value="BAC30680.1"/>
    <property type="molecule type" value="mRNA"/>
</dbReference>
<dbReference type="EMBL" id="AK052199">
    <property type="protein sequence ID" value="BAC34880.1"/>
    <property type="molecule type" value="mRNA"/>
</dbReference>
<dbReference type="EMBL" id="AK142708">
    <property type="protein sequence ID" value="BAE25168.1"/>
    <property type="molecule type" value="mRNA"/>
</dbReference>
<dbReference type="EMBL" id="BC061097">
    <property type="protein sequence ID" value="AAH61097.1"/>
    <property type="molecule type" value="mRNA"/>
</dbReference>
<dbReference type="CCDS" id="CCDS35899.1"/>
<dbReference type="PIR" id="A49057">
    <property type="entry name" value="A49057"/>
</dbReference>
<dbReference type="RefSeq" id="NP_001135399.1">
    <property type="nucleotide sequence ID" value="NM_001141927.1"/>
</dbReference>
<dbReference type="RefSeq" id="NP_075618.1">
    <property type="nucleotide sequence ID" value="NM_023129.5"/>
</dbReference>
<dbReference type="PDB" id="3O7L">
    <property type="method" value="X-ray"/>
    <property type="resolution" value="2.80 A"/>
    <property type="chains" value="I=4-18"/>
</dbReference>
<dbReference type="PDBsum" id="3O7L"/>
<dbReference type="BMRB" id="P61014"/>
<dbReference type="SMR" id="P61014"/>
<dbReference type="BioGRID" id="202252">
    <property type="interactions" value="1"/>
</dbReference>
<dbReference type="ComplexPortal" id="CPX-55">
    <property type="entry name" value="Cardiac phospholamban complex"/>
</dbReference>
<dbReference type="FunCoup" id="P61014">
    <property type="interactions" value="565"/>
</dbReference>
<dbReference type="IntAct" id="P61014">
    <property type="interactions" value="6"/>
</dbReference>
<dbReference type="STRING" id="10090.ENSMUSP00000045709"/>
<dbReference type="GlyGen" id="P61014">
    <property type="glycosylation" value="1 site, 1 O-linked glycan (1 site)"/>
</dbReference>
<dbReference type="iPTMnet" id="P61014"/>
<dbReference type="PhosphoSitePlus" id="P61014"/>
<dbReference type="SwissPalm" id="P61014"/>
<dbReference type="PaxDb" id="10090-ENSMUSP00000132743"/>
<dbReference type="ProteomicsDB" id="289809"/>
<dbReference type="ABCD" id="P61014">
    <property type="antibodies" value="2 sequenced antibodies"/>
</dbReference>
<dbReference type="Antibodypedia" id="3353">
    <property type="antibodies" value="502 antibodies from 38 providers"/>
</dbReference>
<dbReference type="DNASU" id="18821"/>
<dbReference type="Ensembl" id="ENSMUST00000046221.8">
    <property type="protein sequence ID" value="ENSMUSP00000045709.7"/>
    <property type="gene ID" value="ENSMUSG00000038583.14"/>
</dbReference>
<dbReference type="Ensembl" id="ENSMUST00000163319.9">
    <property type="protein sequence ID" value="ENSMUSP00000132743.2"/>
    <property type="gene ID" value="ENSMUSG00000038583.14"/>
</dbReference>
<dbReference type="Ensembl" id="ENSMUST00000218468.2">
    <property type="protein sequence ID" value="ENSMUSP00000151745.2"/>
    <property type="gene ID" value="ENSMUSG00000038583.14"/>
</dbReference>
<dbReference type="Ensembl" id="ENSMUST00000219491.2">
    <property type="protein sequence ID" value="ENSMUSP00000151641.2"/>
    <property type="gene ID" value="ENSMUSG00000038583.14"/>
</dbReference>
<dbReference type="Ensembl" id="ENSMUST00000219921.2">
    <property type="protein sequence ID" value="ENSMUSP00000151860.2"/>
    <property type="gene ID" value="ENSMUSG00000038583.14"/>
</dbReference>
<dbReference type="Ensembl" id="ENSMUST00000220197.2">
    <property type="protein sequence ID" value="ENSMUSP00000151966.2"/>
    <property type="gene ID" value="ENSMUSG00000038583.14"/>
</dbReference>
<dbReference type="GeneID" id="18821"/>
<dbReference type="KEGG" id="mmu:18821"/>
<dbReference type="UCSC" id="uc007fbo.2">
    <property type="organism name" value="mouse"/>
</dbReference>
<dbReference type="AGR" id="MGI:97622"/>
<dbReference type="CTD" id="5350"/>
<dbReference type="MGI" id="MGI:97622">
    <property type="gene designation" value="Pln"/>
</dbReference>
<dbReference type="VEuPathDB" id="HostDB:ENSMUSG00000038583"/>
<dbReference type="eggNOG" id="ENOG502S97F">
    <property type="taxonomic scope" value="Eukaryota"/>
</dbReference>
<dbReference type="GeneTree" id="ENSGT00390000002403"/>
<dbReference type="HOGENOM" id="CLU_214576_0_0_1"/>
<dbReference type="InParanoid" id="P61014"/>
<dbReference type="OMA" id="QHTMRSA"/>
<dbReference type="TreeFam" id="TF330750"/>
<dbReference type="Reactome" id="R-MMU-5578775">
    <property type="pathway name" value="Ion homeostasis"/>
</dbReference>
<dbReference type="Reactome" id="R-MMU-936837">
    <property type="pathway name" value="Ion transport by P-type ATPases"/>
</dbReference>
<dbReference type="BioGRID-ORCS" id="18821">
    <property type="hits" value="1 hit in 74 CRISPR screens"/>
</dbReference>
<dbReference type="ChiTaRS" id="Pln">
    <property type="organism name" value="mouse"/>
</dbReference>
<dbReference type="PRO" id="PR:P61014"/>
<dbReference type="Proteomes" id="UP000000589">
    <property type="component" value="Chromosome 10"/>
</dbReference>
<dbReference type="RNAct" id="P61014">
    <property type="molecule type" value="protein"/>
</dbReference>
<dbReference type="Bgee" id="ENSMUSG00000038583">
    <property type="expression patterns" value="Expressed in interventricular septum and 118 other cell types or tissues"/>
</dbReference>
<dbReference type="GO" id="GO:0090534">
    <property type="term" value="C:calcium ion-transporting ATPase complex"/>
    <property type="evidence" value="ECO:0007669"/>
    <property type="project" value="Ensembl"/>
</dbReference>
<dbReference type="GO" id="GO:0005789">
    <property type="term" value="C:endoplasmic reticulum membrane"/>
    <property type="evidence" value="ECO:0000314"/>
    <property type="project" value="UniProtKB"/>
</dbReference>
<dbReference type="GO" id="GO:0031966">
    <property type="term" value="C:mitochondrial membrane"/>
    <property type="evidence" value="ECO:0007669"/>
    <property type="project" value="UniProtKB-SubCell"/>
</dbReference>
<dbReference type="GO" id="GO:1990629">
    <property type="term" value="C:phospholamban complex"/>
    <property type="evidence" value="ECO:0007669"/>
    <property type="project" value="Ensembl"/>
</dbReference>
<dbReference type="GO" id="GO:0016529">
    <property type="term" value="C:sarcoplasmic reticulum"/>
    <property type="evidence" value="ECO:0000314"/>
    <property type="project" value="MGI"/>
</dbReference>
<dbReference type="GO" id="GO:0033017">
    <property type="term" value="C:sarcoplasmic reticulum membrane"/>
    <property type="evidence" value="ECO:0000314"/>
    <property type="project" value="UniProtKB"/>
</dbReference>
<dbReference type="GO" id="GO:0031982">
    <property type="term" value="C:vesicle"/>
    <property type="evidence" value="ECO:0007669"/>
    <property type="project" value="Ensembl"/>
</dbReference>
<dbReference type="GO" id="GO:0042030">
    <property type="term" value="F:ATPase inhibitor activity"/>
    <property type="evidence" value="ECO:0000314"/>
    <property type="project" value="UniProt"/>
</dbReference>
<dbReference type="GO" id="GO:0042803">
    <property type="term" value="F:protein homodimerization activity"/>
    <property type="evidence" value="ECO:0000314"/>
    <property type="project" value="UniProtKB"/>
</dbReference>
<dbReference type="GO" id="GO:0001675">
    <property type="term" value="P:acrosome assembly"/>
    <property type="evidence" value="ECO:0000314"/>
    <property type="project" value="UniProtKB"/>
</dbReference>
<dbReference type="GO" id="GO:0086023">
    <property type="term" value="P:adenylate cyclase-activating adrenergic receptor signaling pathway involved in heart process"/>
    <property type="evidence" value="ECO:0000315"/>
    <property type="project" value="MGI"/>
</dbReference>
<dbReference type="GO" id="GO:0006816">
    <property type="term" value="P:calcium ion transport"/>
    <property type="evidence" value="ECO:0007669"/>
    <property type="project" value="Ensembl"/>
</dbReference>
<dbReference type="GO" id="GO:0048738">
    <property type="term" value="P:cardiac muscle tissue development"/>
    <property type="evidence" value="ECO:0000316"/>
    <property type="project" value="MGI"/>
</dbReference>
<dbReference type="GO" id="GO:0050802">
    <property type="term" value="P:circadian sleep/wake cycle, sleep"/>
    <property type="evidence" value="ECO:0000315"/>
    <property type="project" value="UniProtKB"/>
</dbReference>
<dbReference type="GO" id="GO:0006874">
    <property type="term" value="P:intracellular calcium ion homeostasis"/>
    <property type="evidence" value="ECO:0000314"/>
    <property type="project" value="UniProtKB"/>
</dbReference>
<dbReference type="GO" id="GO:0045475">
    <property type="term" value="P:locomotor rhythm"/>
    <property type="evidence" value="ECO:0000315"/>
    <property type="project" value="UniProtKB"/>
</dbReference>
<dbReference type="GO" id="GO:0046716">
    <property type="term" value="P:muscle cell cellular homeostasis"/>
    <property type="evidence" value="ECO:0000316"/>
    <property type="project" value="MGI"/>
</dbReference>
<dbReference type="GO" id="GO:1901895">
    <property type="term" value="P:negative regulation of ATPase-coupled calcium transmembrane transporter activity"/>
    <property type="evidence" value="ECO:0000315"/>
    <property type="project" value="UniProtKB"/>
</dbReference>
<dbReference type="GO" id="GO:1902081">
    <property type="term" value="P:negative regulation of calcium ion import into sarcoplasmic reticulum"/>
    <property type="evidence" value="ECO:0000315"/>
    <property type="project" value="UniProtKB"/>
</dbReference>
<dbReference type="GO" id="GO:0045822">
    <property type="term" value="P:negative regulation of heart contraction"/>
    <property type="evidence" value="ECO:0000315"/>
    <property type="project" value="MGI"/>
</dbReference>
<dbReference type="GO" id="GO:0010459">
    <property type="term" value="P:negative regulation of heart rate"/>
    <property type="evidence" value="ECO:0007669"/>
    <property type="project" value="Ensembl"/>
</dbReference>
<dbReference type="GO" id="GO:0007219">
    <property type="term" value="P:Notch signaling pathway"/>
    <property type="evidence" value="ECO:0000314"/>
    <property type="project" value="MGI"/>
</dbReference>
<dbReference type="GO" id="GO:0090279">
    <property type="term" value="P:regulation of calcium ion import"/>
    <property type="evidence" value="ECO:0000315"/>
    <property type="project" value="MGI"/>
</dbReference>
<dbReference type="GO" id="GO:0051924">
    <property type="term" value="P:regulation of calcium ion transport"/>
    <property type="evidence" value="ECO:0000250"/>
    <property type="project" value="UniProtKB"/>
</dbReference>
<dbReference type="GO" id="GO:0086004">
    <property type="term" value="P:regulation of cardiac muscle cell contraction"/>
    <property type="evidence" value="ECO:0000315"/>
    <property type="project" value="MGI"/>
</dbReference>
<dbReference type="GO" id="GO:0010881">
    <property type="term" value="P:regulation of cardiac muscle contraction by regulation of the release of sequestered calcium ion"/>
    <property type="evidence" value="ECO:0000315"/>
    <property type="project" value="MGI"/>
</dbReference>
<dbReference type="GO" id="GO:0008016">
    <property type="term" value="P:regulation of heart contraction"/>
    <property type="evidence" value="ECO:0000315"/>
    <property type="project" value="MGI"/>
</dbReference>
<dbReference type="GO" id="GO:1901077">
    <property type="term" value="P:regulation of relaxation of muscle"/>
    <property type="evidence" value="ECO:0000315"/>
    <property type="project" value="MGI"/>
</dbReference>
<dbReference type="GO" id="GO:0010880">
    <property type="term" value="P:regulation of release of sequestered calcium ion into cytosol by sarcoplasmic reticulum"/>
    <property type="evidence" value="ECO:0000315"/>
    <property type="project" value="MGI"/>
</dbReference>
<dbReference type="GO" id="GO:0002026">
    <property type="term" value="P:regulation of the force of heart contraction"/>
    <property type="evidence" value="ECO:0000315"/>
    <property type="project" value="MGI"/>
</dbReference>
<dbReference type="GO" id="GO:0086092">
    <property type="term" value="P:regulation of the force of heart contraction by cardiac conduction"/>
    <property type="evidence" value="ECO:0000315"/>
    <property type="project" value="MGI"/>
</dbReference>
<dbReference type="GO" id="GO:0032868">
    <property type="term" value="P:response to insulin"/>
    <property type="evidence" value="ECO:0007669"/>
    <property type="project" value="Ensembl"/>
</dbReference>
<dbReference type="GO" id="GO:0033574">
    <property type="term" value="P:response to testosterone"/>
    <property type="evidence" value="ECO:0007669"/>
    <property type="project" value="Ensembl"/>
</dbReference>
<dbReference type="GO" id="GO:0010043">
    <property type="term" value="P:response to zinc ion"/>
    <property type="evidence" value="ECO:0007669"/>
    <property type="project" value="Ensembl"/>
</dbReference>
<dbReference type="GO" id="GO:0007283">
    <property type="term" value="P:spermatogenesis"/>
    <property type="evidence" value="ECO:0000314"/>
    <property type="project" value="UniProt"/>
</dbReference>
<dbReference type="GO" id="GO:0008542">
    <property type="term" value="P:visual learning"/>
    <property type="evidence" value="ECO:0000315"/>
    <property type="project" value="UniProtKB"/>
</dbReference>
<dbReference type="CDD" id="cd20250">
    <property type="entry name" value="Phospholamban"/>
    <property type="match status" value="1"/>
</dbReference>
<dbReference type="FunFam" id="1.20.5.290:FF:000001">
    <property type="entry name" value="Cardiac phospholamban"/>
    <property type="match status" value="1"/>
</dbReference>
<dbReference type="Gene3D" id="1.20.5.290">
    <property type="entry name" value="Phospholamban"/>
    <property type="match status" value="1"/>
</dbReference>
<dbReference type="InterPro" id="IPR005984">
    <property type="entry name" value="PLB"/>
</dbReference>
<dbReference type="NCBIfam" id="TIGR01294">
    <property type="entry name" value="P_lamban"/>
    <property type="match status" value="1"/>
</dbReference>
<dbReference type="PANTHER" id="PTHR21194">
    <property type="entry name" value="CARDIAC PHOSPHOLAMBAN"/>
    <property type="match status" value="1"/>
</dbReference>
<dbReference type="PANTHER" id="PTHR21194:SF1">
    <property type="entry name" value="CARDIAC PHOSPHOLAMBAN"/>
    <property type="match status" value="1"/>
</dbReference>
<dbReference type="Pfam" id="PF04272">
    <property type="entry name" value="Phospholamban"/>
    <property type="match status" value="1"/>
</dbReference>
<dbReference type="PIRSF" id="PIRSF001665">
    <property type="entry name" value="PLB"/>
    <property type="match status" value="1"/>
</dbReference>
<protein>
    <recommendedName>
        <fullName evidence="14 16">Phospholamban</fullName>
        <shortName>PLB</shortName>
    </recommendedName>
</protein>
<organism>
    <name type="scientific">Mus musculus</name>
    <name type="common">Mouse</name>
    <dbReference type="NCBI Taxonomy" id="10090"/>
    <lineage>
        <taxon>Eukaryota</taxon>
        <taxon>Metazoa</taxon>
        <taxon>Chordata</taxon>
        <taxon>Craniata</taxon>
        <taxon>Vertebrata</taxon>
        <taxon>Euteleostomi</taxon>
        <taxon>Mammalia</taxon>
        <taxon>Eutheria</taxon>
        <taxon>Euarchontoglires</taxon>
        <taxon>Glires</taxon>
        <taxon>Rodentia</taxon>
        <taxon>Myomorpha</taxon>
        <taxon>Muroidea</taxon>
        <taxon>Muridae</taxon>
        <taxon>Murinae</taxon>
        <taxon>Mus</taxon>
        <taxon>Mus</taxon>
    </lineage>
</organism>
<comment type="function">
    <text evidence="3 7 9 10 11 12 13">Reversibly inhibits the activity of ATP2A2/SERCA2 in cardiac sarcoplasmic reticulum by decreasing the apparent affinity of the ATPase for Ca(2+) (PubMed:22971924, PubMed:27923914, PubMed:31449798). Binds preferentially to the ATP-bound E1 conformational form of ATP2A2 which predominates at low Ca(2+) concentrations during the diastolic phase of the cardiac cycle (By similarity). Inhibits ATP2A2 Ca(2+) affinity by disrupting its allosteric activation by ATP (By similarity). Modulates the contractility of the heart muscle in response to physiological stimuli via its effects on ATP2A2. Modulates calcium re-uptake during muscle relaxation and plays an important role in calcium homeostasis in the heart muscle. The degree of ATP2A2 inhibition depends on the oligomeric state of PLN. ATP2A2 inhibition is alleviated by PLN phosphorylation (PubMed:22971924, PubMed:26816378). Also inhibits the activity of ATP2A3/SERCA3 (PubMed:27923914). Controls intracellular Ca(2+) levels in elongated spermatids and may play a role in germ cell differentiation (PubMed:30733280). In the thalamic reticular nucleus of the brain, plays a role in the regulation of sleep patterns and executive functioning (PubMed:38493225).</text>
</comment>
<comment type="subunit">
    <text evidence="2 8 10 12">Homopentamer (PubMed:26644582). Can also form heterooligomers with other sarcoplasmic/endoplasmic reticulum calcium ATPase (SERCA) regulators ARLN, ERLN, SLN and STRIT1/DWORF (By similarity). Monomer (PubMed:31449798). Interacts with HAX1. Interacts as a monomer with ATP2A2; the interaction decreases ATP2A2 Ca(2+) affinity (PubMed:27923914, PubMed:31449798). Interacts with VMP1; VMP1 competes with PLN and SLN to prevent them from forming an inhibitory complex with ATP2A2. Interacts with S100A1 in a Ca(2+)-dependent manner.</text>
</comment>
<comment type="interaction">
    <interactant intactId="EBI-10148373">
        <id>P61014</id>
    </interactant>
    <interactant intactId="EBI-400564">
        <id>P05132</id>
        <label>Prkaca</label>
    </interactant>
    <organismsDiffer>false</organismsDiffer>
    <experiments>2</experiments>
</comment>
<comment type="interaction">
    <interactant intactId="EBI-10148373">
        <id>P61014</id>
    </interactant>
    <interactant intactId="EBI-351018">
        <id>Q13557</id>
        <label>CAMK2D</label>
    </interactant>
    <organismsDiffer>true</organismsDiffer>
    <experiments>2</experiments>
</comment>
<comment type="interaction">
    <interactant intactId="EBI-10148373">
        <id>P61014</id>
    </interactant>
    <interactant intactId="EBI-359832">
        <id>P61981</id>
        <label>YWHAG</label>
    </interactant>
    <organismsDiffer>true</organismsDiffer>
    <experiments>3</experiments>
</comment>
<comment type="subcellular location">
    <subcellularLocation>
        <location evidence="9 10 11">Endoplasmic reticulum membrane</location>
        <topology evidence="4">Single-pass membrane protein</topology>
    </subcellularLocation>
    <subcellularLocation>
        <location evidence="2">Sarcoplasmic reticulum membrane</location>
        <topology evidence="4">Single-pass membrane protein</topology>
    </subcellularLocation>
    <subcellularLocation>
        <location evidence="1">Mitochondrion membrane</location>
        <topology evidence="4">Single-pass membrane protein</topology>
    </subcellularLocation>
    <subcellularLocation>
        <location evidence="6">Membrane</location>
        <topology evidence="4">Single-pass membrane protein</topology>
    </subcellularLocation>
    <text evidence="2">Colocalizes with HAX1 at the endoplasmic reticulum. Colocalizes with DMPK at the sarcoplasmic reticulum.</text>
</comment>
<comment type="tissue specificity">
    <text evidence="10 11 13">Expressed in testis (at protein level) (PubMed:30733280). In brain, expressed specifically in GABAergic GAD67+ neurons of the thalamic reticular nucleus where it colocalizes with ATP2A2/SERCA2 (at protein level) (PubMed:38493225). Expressed in the bladder and in the atria and ventricles of the heart (PubMed:27923914).</text>
</comment>
<comment type="PTM">
    <text evidence="2 6 7">Phosphorylated at Thr-17 by CaMK2, and in response to beta-adrenergic stimulation. Phosphorylation by DMPK may stimulate sarcoplasmic reticulum calcium uptake in cardiomyocytes (By similarity). Phosphorylation by PKA abolishes the inhibition of ATP2A2-mediated calcium uptake.</text>
</comment>
<comment type="PTM">
    <text evidence="8">Palmitoylated by ZDHHC16, promoting formation of the homopentamer.</text>
</comment>
<comment type="PTM">
    <text evidence="5">In elongated spermatids, proteolytically cleaved by SPPL2C which modulates intracellular Ca(2+) homeostasis.</text>
</comment>
<comment type="disruption phenotype">
    <text evidence="13">Hyperactivity and impaired spatial working memory with no effect on sociability or preference for social novelty (PubMed:38493225). Conditional knockout in GABAergic neurons of the thalamic reticular nucleus results in hyperactivity, altered sleep architecture and impaired executive functioning which gives rise to impulsivity (PubMed:38493225).</text>
</comment>
<comment type="similarity">
    <text evidence="15">Belongs to the phospholamban family.</text>
</comment>
<reference key="1">
    <citation type="journal article" date="1992" name="Circ. Res.">
        <title>Mouse phospholamban gene expression during development in vivo and in vitro.</title>
        <authorList>
            <person name="Ganim J.R."/>
            <person name="Luo W."/>
            <person name="Ponniah S."/>
            <person name="Grupp I."/>
            <person name="Kim H.W."/>
            <person name="Ferguson D.G."/>
            <person name="Kadambi V."/>
            <person name="Neumann J.C."/>
            <person name="Doetschman T."/>
            <person name="Kranias E.G."/>
        </authorList>
    </citation>
    <scope>NUCLEOTIDE SEQUENCE [MRNA]</scope>
    <source>
        <tissue>Heart</tissue>
    </source>
</reference>
<reference key="2">
    <citation type="journal article" date="2005" name="Science">
        <title>The transcriptional landscape of the mammalian genome.</title>
        <authorList>
            <person name="Carninci P."/>
            <person name="Kasukawa T."/>
            <person name="Katayama S."/>
            <person name="Gough J."/>
            <person name="Frith M.C."/>
            <person name="Maeda N."/>
            <person name="Oyama R."/>
            <person name="Ravasi T."/>
            <person name="Lenhard B."/>
            <person name="Wells C."/>
            <person name="Kodzius R."/>
            <person name="Shimokawa K."/>
            <person name="Bajic V.B."/>
            <person name="Brenner S.E."/>
            <person name="Batalov S."/>
            <person name="Forrest A.R."/>
            <person name="Zavolan M."/>
            <person name="Davis M.J."/>
            <person name="Wilming L.G."/>
            <person name="Aidinis V."/>
            <person name="Allen J.E."/>
            <person name="Ambesi-Impiombato A."/>
            <person name="Apweiler R."/>
            <person name="Aturaliya R.N."/>
            <person name="Bailey T.L."/>
            <person name="Bansal M."/>
            <person name="Baxter L."/>
            <person name="Beisel K.W."/>
            <person name="Bersano T."/>
            <person name="Bono H."/>
            <person name="Chalk A.M."/>
            <person name="Chiu K.P."/>
            <person name="Choudhary V."/>
            <person name="Christoffels A."/>
            <person name="Clutterbuck D.R."/>
            <person name="Crowe M.L."/>
            <person name="Dalla E."/>
            <person name="Dalrymple B.P."/>
            <person name="de Bono B."/>
            <person name="Della Gatta G."/>
            <person name="di Bernardo D."/>
            <person name="Down T."/>
            <person name="Engstrom P."/>
            <person name="Fagiolini M."/>
            <person name="Faulkner G."/>
            <person name="Fletcher C.F."/>
            <person name="Fukushima T."/>
            <person name="Furuno M."/>
            <person name="Futaki S."/>
            <person name="Gariboldi M."/>
            <person name="Georgii-Hemming P."/>
            <person name="Gingeras T.R."/>
            <person name="Gojobori T."/>
            <person name="Green R.E."/>
            <person name="Gustincich S."/>
            <person name="Harbers M."/>
            <person name="Hayashi Y."/>
            <person name="Hensch T.K."/>
            <person name="Hirokawa N."/>
            <person name="Hill D."/>
            <person name="Huminiecki L."/>
            <person name="Iacono M."/>
            <person name="Ikeo K."/>
            <person name="Iwama A."/>
            <person name="Ishikawa T."/>
            <person name="Jakt M."/>
            <person name="Kanapin A."/>
            <person name="Katoh M."/>
            <person name="Kawasawa Y."/>
            <person name="Kelso J."/>
            <person name="Kitamura H."/>
            <person name="Kitano H."/>
            <person name="Kollias G."/>
            <person name="Krishnan S.P."/>
            <person name="Kruger A."/>
            <person name="Kummerfeld S.K."/>
            <person name="Kurochkin I.V."/>
            <person name="Lareau L.F."/>
            <person name="Lazarevic D."/>
            <person name="Lipovich L."/>
            <person name="Liu J."/>
            <person name="Liuni S."/>
            <person name="McWilliam S."/>
            <person name="Madan Babu M."/>
            <person name="Madera M."/>
            <person name="Marchionni L."/>
            <person name="Matsuda H."/>
            <person name="Matsuzawa S."/>
            <person name="Miki H."/>
            <person name="Mignone F."/>
            <person name="Miyake S."/>
            <person name="Morris K."/>
            <person name="Mottagui-Tabar S."/>
            <person name="Mulder N."/>
            <person name="Nakano N."/>
            <person name="Nakauchi H."/>
            <person name="Ng P."/>
            <person name="Nilsson R."/>
            <person name="Nishiguchi S."/>
            <person name="Nishikawa S."/>
            <person name="Nori F."/>
            <person name="Ohara O."/>
            <person name="Okazaki Y."/>
            <person name="Orlando V."/>
            <person name="Pang K.C."/>
            <person name="Pavan W.J."/>
            <person name="Pavesi G."/>
            <person name="Pesole G."/>
            <person name="Petrovsky N."/>
            <person name="Piazza S."/>
            <person name="Reed J."/>
            <person name="Reid J.F."/>
            <person name="Ring B.Z."/>
            <person name="Ringwald M."/>
            <person name="Rost B."/>
            <person name="Ruan Y."/>
            <person name="Salzberg S.L."/>
            <person name="Sandelin A."/>
            <person name="Schneider C."/>
            <person name="Schoenbach C."/>
            <person name="Sekiguchi K."/>
            <person name="Semple C.A."/>
            <person name="Seno S."/>
            <person name="Sessa L."/>
            <person name="Sheng Y."/>
            <person name="Shibata Y."/>
            <person name="Shimada H."/>
            <person name="Shimada K."/>
            <person name="Silva D."/>
            <person name="Sinclair B."/>
            <person name="Sperling S."/>
            <person name="Stupka E."/>
            <person name="Sugiura K."/>
            <person name="Sultana R."/>
            <person name="Takenaka Y."/>
            <person name="Taki K."/>
            <person name="Tammoja K."/>
            <person name="Tan S.L."/>
            <person name="Tang S."/>
            <person name="Taylor M.S."/>
            <person name="Tegner J."/>
            <person name="Teichmann S.A."/>
            <person name="Ueda H.R."/>
            <person name="van Nimwegen E."/>
            <person name="Verardo R."/>
            <person name="Wei C.L."/>
            <person name="Yagi K."/>
            <person name="Yamanishi H."/>
            <person name="Zabarovsky E."/>
            <person name="Zhu S."/>
            <person name="Zimmer A."/>
            <person name="Hide W."/>
            <person name="Bult C."/>
            <person name="Grimmond S.M."/>
            <person name="Teasdale R.D."/>
            <person name="Liu E.T."/>
            <person name="Brusic V."/>
            <person name="Quackenbush J."/>
            <person name="Wahlestedt C."/>
            <person name="Mattick J.S."/>
            <person name="Hume D.A."/>
            <person name="Kai C."/>
            <person name="Sasaki D."/>
            <person name="Tomaru Y."/>
            <person name="Fukuda S."/>
            <person name="Kanamori-Katayama M."/>
            <person name="Suzuki M."/>
            <person name="Aoki J."/>
            <person name="Arakawa T."/>
            <person name="Iida J."/>
            <person name="Imamura K."/>
            <person name="Itoh M."/>
            <person name="Kato T."/>
            <person name="Kawaji H."/>
            <person name="Kawagashira N."/>
            <person name="Kawashima T."/>
            <person name="Kojima M."/>
            <person name="Kondo S."/>
            <person name="Konno H."/>
            <person name="Nakano K."/>
            <person name="Ninomiya N."/>
            <person name="Nishio T."/>
            <person name="Okada M."/>
            <person name="Plessy C."/>
            <person name="Shibata K."/>
            <person name="Shiraki T."/>
            <person name="Suzuki S."/>
            <person name="Tagami M."/>
            <person name="Waki K."/>
            <person name="Watahiki A."/>
            <person name="Okamura-Oho Y."/>
            <person name="Suzuki H."/>
            <person name="Kawai J."/>
            <person name="Hayashizaki Y."/>
        </authorList>
    </citation>
    <scope>NUCLEOTIDE SEQUENCE [LARGE SCALE MRNA]</scope>
    <source>
        <strain>C57BL/6J</strain>
        <tissue>Aorta</tissue>
        <tissue>Heart</tissue>
        <tissue>Kidney</tissue>
    </source>
</reference>
<reference key="3">
    <citation type="journal article" date="2004" name="Genome Res.">
        <title>The status, quality, and expansion of the NIH full-length cDNA project: the Mammalian Gene Collection (MGC).</title>
        <authorList>
            <consortium name="The MGC Project Team"/>
        </authorList>
    </citation>
    <scope>NUCLEOTIDE SEQUENCE [LARGE SCALE MRNA]</scope>
    <source>
        <tissue>Testis</tissue>
    </source>
</reference>
<reference key="4">
    <citation type="journal article" date="2010" name="Cell">
        <title>A tissue-specific atlas of mouse protein phosphorylation and expression.</title>
        <authorList>
            <person name="Huttlin E.L."/>
            <person name="Jedrychowski M.P."/>
            <person name="Elias J.E."/>
            <person name="Goswami T."/>
            <person name="Rad R."/>
            <person name="Beausoleil S.A."/>
            <person name="Villen J."/>
            <person name="Haas W."/>
            <person name="Sowa M.E."/>
            <person name="Gygi S.P."/>
        </authorList>
    </citation>
    <scope>PHOSPHORYLATION [LARGE SCALE ANALYSIS] AT SER-16</scope>
    <scope>IDENTIFICATION BY MASS SPECTROMETRY [LARGE SCALE ANALYSIS]</scope>
    <source>
        <tissue>Heart</tissue>
        <tissue>Lung</tissue>
    </source>
</reference>
<reference key="5">
    <citation type="journal article" date="2012" name="J. Muscle Res. Cell Motil.">
        <title>Tuning the structural coupling between the transmembrane and cytoplasmic domains of phospholamban to control sarcoplasmic reticulum Ca(2+)-ATPase (SERCA) function.</title>
        <authorList>
            <person name="Ha K.N."/>
            <person name="Gustavsson M."/>
            <person name="Veglia G."/>
        </authorList>
    </citation>
    <scope>FUNCTION</scope>
    <scope>PHOSPHORYLATION AT SER-16</scope>
    <scope>IDENTIFICATION BY MASS SPECTROMETRY</scope>
    <scope>MUTAGENESIS OF 20-MET--GLN-22; PRO-21 AND GLN-22</scope>
</reference>
<reference key="6">
    <citation type="journal article" date="2010" name="Nat. Chem. Biol.">
        <title>Dynamics connect substrate recognition to catalysis in protein kinase A.</title>
        <authorList>
            <person name="Masterson L.R."/>
            <person name="Cheng C."/>
            <person name="Yu T."/>
            <person name="Tonelli M."/>
            <person name="Kornev A."/>
            <person name="Taylor S.S."/>
            <person name="Veglia G."/>
        </authorList>
    </citation>
    <scope>X-RAY CRYSTALLOGRAPHY (2.8 ANGSTROMS) OF 4-18 IN COMPLEX WITH PRKACA</scope>
    <scope>PHOSPHORYLATION AT SER-16</scope>
    <scope>SUBCELLULAR LOCATION</scope>
</reference>
<reference key="7">
    <citation type="journal article" date="2015" name="Proc. Natl. Acad. Sci. U.S.A.">
        <title>Palmitoyl acyltransferase Aph2 in cardiac function and the development of cardiomyopathy.</title>
        <authorList>
            <person name="Zhou T."/>
            <person name="Li J."/>
            <person name="Zhao P."/>
            <person name="Liu H."/>
            <person name="Jia D."/>
            <person name="Jia H."/>
            <person name="He L."/>
            <person name="Cang Y."/>
            <person name="Boast S."/>
            <person name="Chen Y.H."/>
            <person name="Thibault H."/>
            <person name="Scherrer-Crosbie M."/>
            <person name="Goff S.P."/>
            <person name="Li B."/>
        </authorList>
    </citation>
    <scope>PALMITOYLATION AT CYS-36</scope>
    <scope>PHOSPHORYLATION AT SER-16</scope>
    <scope>SUBUNIT</scope>
    <scope>MUTAGENESIS OF CYS-36; CYS-41 AND CYS-46</scope>
</reference>
<reference key="8">
    <citation type="journal article" date="2016" name="Science">
        <title>Muscle physiology. A peptide encoded by a transcript annotated as long noncoding RNA enhances SERCA activity in muscle.</title>
        <authorList>
            <person name="Nelson B.R."/>
            <person name="Makarewich C.A."/>
            <person name="Anderson D.M."/>
            <person name="Winders B.R."/>
            <person name="Troupes C.D."/>
            <person name="Wu F."/>
            <person name="Reese A.L."/>
            <person name="McAnally J.R."/>
            <person name="Chen X."/>
            <person name="Kavalali E.T."/>
            <person name="Cannon S.C."/>
            <person name="Houser S.R."/>
            <person name="Bassel-Duby R."/>
            <person name="Olson E.N."/>
        </authorList>
    </citation>
    <scope>FUNCTION</scope>
    <scope>SUBCELLULAR LOCATION</scope>
</reference>
<reference key="9">
    <citation type="journal article" date="2016" name="Sci. Signal.">
        <title>Widespread control of calcium signaling by a family of SERCA-inhibiting micropeptides.</title>
        <authorList>
            <person name="Anderson D.M."/>
            <person name="Makarewich C.A."/>
            <person name="Anderson K.M."/>
            <person name="Shelton J.M."/>
            <person name="Bezprozvannaya S."/>
            <person name="Bassel-Duby R."/>
            <person name="Olson E.N."/>
        </authorList>
    </citation>
    <scope>FUNCTION</scope>
    <scope>INTERACTION WITH ATP2A2</scope>
    <scope>SUBCELLULAR LOCATION</scope>
    <scope>TISSUE SPECIFICITY</scope>
</reference>
<reference key="10">
    <citation type="journal article" date="2019" name="EMBO Rep.">
        <title>The intramembrane protease SPPL2c promotes male germ cell development by cleaving phospholamban.</title>
        <authorList>
            <person name="Niemeyer J."/>
            <person name="Mentrup T."/>
            <person name="Heidasch R."/>
            <person name="Mueller S.A."/>
            <person name="Biswas U."/>
            <person name="Meyer R."/>
            <person name="Papadopoulou A.A."/>
            <person name="Dederer V."/>
            <person name="Haug-Kroeper M."/>
            <person name="Adamski V."/>
            <person name="Luellmann-Rauch R."/>
            <person name="Bergmann M."/>
            <person name="Mayerhofer A."/>
            <person name="Saftig P."/>
            <person name="Wennemuth G."/>
            <person name="Jessberger R."/>
            <person name="Fluhrer R."/>
            <person name="Lichtenthaler S.F."/>
            <person name="Lemberg M.K."/>
            <person name="Schroeder B."/>
        </authorList>
    </citation>
    <scope>FUNCTION</scope>
    <scope>TISSUE SPECIFICITY</scope>
    <scope>SUBCELLULAR LOCATION</scope>
    <scope>MUTAGENESIS OF 32-PHE--CYS-36; 36-CYS--CYS-46 AND 42-LEU--CYS-46</scope>
</reference>
<reference key="11">
    <citation type="journal article" date="2019" name="J. Mol. Biol.">
        <title>Newly Discovered Micropeptide Regulators of SERCA Form Oligomers but Bind to the Pump as Monomers.</title>
        <authorList>
            <person name="Singh D.R."/>
            <person name="Dalton M.P."/>
            <person name="Cho E.E."/>
            <person name="Pribadi M.P."/>
            <person name="Zak T.J."/>
            <person name="Seflova J."/>
            <person name="Makarewich C.A."/>
            <person name="Olson E.N."/>
            <person name="Robia S.L."/>
        </authorList>
    </citation>
    <scope>FUNCTION</scope>
    <scope>SUBUNIT</scope>
    <scope>INTERACTION WITH ATP2A2</scope>
</reference>
<reference key="12">
    <citation type="journal article" date="2024" name="Sci. Rep.">
        <title>A novel role for phospholamban in the thalamic reticular nucleus.</title>
        <authorList>
            <person name="Klocke B."/>
            <person name="Britzolaki A."/>
            <person name="Saurine J."/>
            <person name="Ott H."/>
            <person name="Krone K."/>
            <person name="Bahamonde K."/>
            <person name="Thelen C."/>
            <person name="Tzimas C."/>
            <person name="Sanoudou D."/>
            <person name="Kranias E.G."/>
            <person name="Pitychoutis P.M."/>
        </authorList>
    </citation>
    <scope>FUNCTION</scope>
    <scope>TISSUE SPECIFICITY</scope>
    <scope>DISRUPTION PHENOTYPE</scope>
</reference>
<name>PPLA_MOUSE</name>
<proteinExistence type="evidence at protein level"/>
<evidence type="ECO:0000250" key="1">
    <source>
        <dbReference type="UniProtKB" id="A4IFH6"/>
    </source>
</evidence>
<evidence type="ECO:0000250" key="2">
    <source>
        <dbReference type="UniProtKB" id="P26678"/>
    </source>
</evidence>
<evidence type="ECO:0000250" key="3">
    <source>
        <dbReference type="UniProtKB" id="P61012"/>
    </source>
</evidence>
<evidence type="ECO:0000255" key="4"/>
<evidence type="ECO:0000269" key="5">
    <source>
    </source>
</evidence>
<evidence type="ECO:0000269" key="6">
    <source>
    </source>
</evidence>
<evidence type="ECO:0000269" key="7">
    <source>
    </source>
</evidence>
<evidence type="ECO:0000269" key="8">
    <source>
    </source>
</evidence>
<evidence type="ECO:0000269" key="9">
    <source>
    </source>
</evidence>
<evidence type="ECO:0000269" key="10">
    <source>
    </source>
</evidence>
<evidence type="ECO:0000269" key="11">
    <source>
    </source>
</evidence>
<evidence type="ECO:0000269" key="12">
    <source>
    </source>
</evidence>
<evidence type="ECO:0000269" key="13">
    <source>
    </source>
</evidence>
<evidence type="ECO:0000303" key="14">
    <source>
    </source>
</evidence>
<evidence type="ECO:0000305" key="15"/>
<evidence type="ECO:0000312" key="16">
    <source>
        <dbReference type="MGI" id="MGI:97622"/>
    </source>
</evidence>
<evidence type="ECO:0007744" key="17">
    <source>
    </source>
</evidence>
<evidence type="ECO:0007829" key="18">
    <source>
        <dbReference type="PDB" id="3O7L"/>
    </source>
</evidence>
<accession>P61014</accession>
<accession>P20006</accession>
<accession>Q3UQ75</accession>
<keyword id="KW-0002">3D-structure</keyword>
<keyword id="KW-0007">Acetylation</keyword>
<keyword id="KW-0256">Endoplasmic reticulum</keyword>
<keyword id="KW-0449">Lipoprotein</keyword>
<keyword id="KW-0472">Membrane</keyword>
<keyword id="KW-0496">Mitochondrion</keyword>
<keyword id="KW-0564">Palmitate</keyword>
<keyword id="KW-0597">Phosphoprotein</keyword>
<keyword id="KW-1185">Reference proteome</keyword>
<keyword id="KW-0703">Sarcoplasmic reticulum</keyword>
<keyword id="KW-0812">Transmembrane</keyword>
<keyword id="KW-1133">Transmembrane helix</keyword>